<dbReference type="EC" id="3.6.5.3" evidence="2"/>
<dbReference type="EMBL" id="CP000141">
    <property type="protein sequence ID" value="ABB16195.1"/>
    <property type="molecule type" value="Genomic_DNA"/>
</dbReference>
<dbReference type="SMR" id="Q3A9P8"/>
<dbReference type="FunCoup" id="Q3A9P8">
    <property type="interactions" value="467"/>
</dbReference>
<dbReference type="STRING" id="246194.CHY_2327"/>
<dbReference type="KEGG" id="chy:CHY_2327"/>
<dbReference type="eggNOG" id="COG0050">
    <property type="taxonomic scope" value="Bacteria"/>
</dbReference>
<dbReference type="HOGENOM" id="CLU_007265_0_1_9"/>
<dbReference type="InParanoid" id="Q3A9P8"/>
<dbReference type="OrthoDB" id="9804504at2"/>
<dbReference type="Proteomes" id="UP000002706">
    <property type="component" value="Chromosome"/>
</dbReference>
<dbReference type="GO" id="GO:0005829">
    <property type="term" value="C:cytosol"/>
    <property type="evidence" value="ECO:0007669"/>
    <property type="project" value="TreeGrafter"/>
</dbReference>
<dbReference type="GO" id="GO:0005525">
    <property type="term" value="F:GTP binding"/>
    <property type="evidence" value="ECO:0007669"/>
    <property type="project" value="UniProtKB-UniRule"/>
</dbReference>
<dbReference type="GO" id="GO:0003924">
    <property type="term" value="F:GTPase activity"/>
    <property type="evidence" value="ECO:0007669"/>
    <property type="project" value="InterPro"/>
</dbReference>
<dbReference type="GO" id="GO:0003746">
    <property type="term" value="F:translation elongation factor activity"/>
    <property type="evidence" value="ECO:0007669"/>
    <property type="project" value="UniProtKB-UniRule"/>
</dbReference>
<dbReference type="CDD" id="cd01884">
    <property type="entry name" value="EF_Tu"/>
    <property type="match status" value="1"/>
</dbReference>
<dbReference type="CDD" id="cd03697">
    <property type="entry name" value="EFTU_II"/>
    <property type="match status" value="1"/>
</dbReference>
<dbReference type="CDD" id="cd03707">
    <property type="entry name" value="EFTU_III"/>
    <property type="match status" value="1"/>
</dbReference>
<dbReference type="FunFam" id="2.40.30.10:FF:000001">
    <property type="entry name" value="Elongation factor Tu"/>
    <property type="match status" value="1"/>
</dbReference>
<dbReference type="FunFam" id="3.40.50.300:FF:000003">
    <property type="entry name" value="Elongation factor Tu"/>
    <property type="match status" value="1"/>
</dbReference>
<dbReference type="Gene3D" id="3.40.50.300">
    <property type="entry name" value="P-loop containing nucleotide triphosphate hydrolases"/>
    <property type="match status" value="1"/>
</dbReference>
<dbReference type="Gene3D" id="2.40.30.10">
    <property type="entry name" value="Translation factors"/>
    <property type="match status" value="2"/>
</dbReference>
<dbReference type="HAMAP" id="MF_00118_B">
    <property type="entry name" value="EF_Tu_B"/>
    <property type="match status" value="1"/>
</dbReference>
<dbReference type="InterPro" id="IPR041709">
    <property type="entry name" value="EF-Tu_GTP-bd"/>
</dbReference>
<dbReference type="InterPro" id="IPR050055">
    <property type="entry name" value="EF-Tu_GTPase"/>
</dbReference>
<dbReference type="InterPro" id="IPR004161">
    <property type="entry name" value="EFTu-like_2"/>
</dbReference>
<dbReference type="InterPro" id="IPR033720">
    <property type="entry name" value="EFTU_2"/>
</dbReference>
<dbReference type="InterPro" id="IPR031157">
    <property type="entry name" value="G_TR_CS"/>
</dbReference>
<dbReference type="InterPro" id="IPR027417">
    <property type="entry name" value="P-loop_NTPase"/>
</dbReference>
<dbReference type="InterPro" id="IPR005225">
    <property type="entry name" value="Small_GTP-bd"/>
</dbReference>
<dbReference type="InterPro" id="IPR000795">
    <property type="entry name" value="T_Tr_GTP-bd_dom"/>
</dbReference>
<dbReference type="InterPro" id="IPR009000">
    <property type="entry name" value="Transl_B-barrel_sf"/>
</dbReference>
<dbReference type="InterPro" id="IPR009001">
    <property type="entry name" value="Transl_elong_EF1A/Init_IF2_C"/>
</dbReference>
<dbReference type="InterPro" id="IPR004541">
    <property type="entry name" value="Transl_elong_EFTu/EF1A_bac/org"/>
</dbReference>
<dbReference type="InterPro" id="IPR004160">
    <property type="entry name" value="Transl_elong_EFTu/EF1A_C"/>
</dbReference>
<dbReference type="NCBIfam" id="TIGR00485">
    <property type="entry name" value="EF-Tu"/>
    <property type="match status" value="1"/>
</dbReference>
<dbReference type="NCBIfam" id="NF000766">
    <property type="entry name" value="PRK00049.1"/>
    <property type="match status" value="1"/>
</dbReference>
<dbReference type="NCBIfam" id="NF009372">
    <property type="entry name" value="PRK12735.1"/>
    <property type="match status" value="1"/>
</dbReference>
<dbReference type="NCBIfam" id="NF009373">
    <property type="entry name" value="PRK12736.1"/>
    <property type="match status" value="1"/>
</dbReference>
<dbReference type="NCBIfam" id="TIGR00231">
    <property type="entry name" value="small_GTP"/>
    <property type="match status" value="1"/>
</dbReference>
<dbReference type="PANTHER" id="PTHR43721:SF22">
    <property type="entry name" value="ELONGATION FACTOR TU, MITOCHONDRIAL"/>
    <property type="match status" value="1"/>
</dbReference>
<dbReference type="PANTHER" id="PTHR43721">
    <property type="entry name" value="ELONGATION FACTOR TU-RELATED"/>
    <property type="match status" value="1"/>
</dbReference>
<dbReference type="Pfam" id="PF00009">
    <property type="entry name" value="GTP_EFTU"/>
    <property type="match status" value="1"/>
</dbReference>
<dbReference type="Pfam" id="PF03144">
    <property type="entry name" value="GTP_EFTU_D2"/>
    <property type="match status" value="1"/>
</dbReference>
<dbReference type="Pfam" id="PF03143">
    <property type="entry name" value="GTP_EFTU_D3"/>
    <property type="match status" value="1"/>
</dbReference>
<dbReference type="PRINTS" id="PR00315">
    <property type="entry name" value="ELONGATNFCT"/>
</dbReference>
<dbReference type="SUPFAM" id="SSF50465">
    <property type="entry name" value="EF-Tu/eEF-1alpha/eIF2-gamma C-terminal domain"/>
    <property type="match status" value="1"/>
</dbReference>
<dbReference type="SUPFAM" id="SSF52540">
    <property type="entry name" value="P-loop containing nucleoside triphosphate hydrolases"/>
    <property type="match status" value="1"/>
</dbReference>
<dbReference type="SUPFAM" id="SSF50447">
    <property type="entry name" value="Translation proteins"/>
    <property type="match status" value="1"/>
</dbReference>
<dbReference type="PROSITE" id="PS00301">
    <property type="entry name" value="G_TR_1"/>
    <property type="match status" value="1"/>
</dbReference>
<dbReference type="PROSITE" id="PS51722">
    <property type="entry name" value="G_TR_2"/>
    <property type="match status" value="1"/>
</dbReference>
<keyword id="KW-0963">Cytoplasm</keyword>
<keyword id="KW-0251">Elongation factor</keyword>
<keyword id="KW-0342">GTP-binding</keyword>
<keyword id="KW-0378">Hydrolase</keyword>
<keyword id="KW-0460">Magnesium</keyword>
<keyword id="KW-0479">Metal-binding</keyword>
<keyword id="KW-0547">Nucleotide-binding</keyword>
<keyword id="KW-0648">Protein biosynthesis</keyword>
<keyword id="KW-1185">Reference proteome</keyword>
<comment type="function">
    <text evidence="2">GTP hydrolase that promotes the GTP-dependent binding of aminoacyl-tRNA to the A-site of ribosomes during protein biosynthesis.</text>
</comment>
<comment type="catalytic activity">
    <reaction evidence="2">
        <text>GTP + H2O = GDP + phosphate + H(+)</text>
        <dbReference type="Rhea" id="RHEA:19669"/>
        <dbReference type="ChEBI" id="CHEBI:15377"/>
        <dbReference type="ChEBI" id="CHEBI:15378"/>
        <dbReference type="ChEBI" id="CHEBI:37565"/>
        <dbReference type="ChEBI" id="CHEBI:43474"/>
        <dbReference type="ChEBI" id="CHEBI:58189"/>
        <dbReference type="EC" id="3.6.5.3"/>
    </reaction>
    <physiologicalReaction direction="left-to-right" evidence="2">
        <dbReference type="Rhea" id="RHEA:19670"/>
    </physiologicalReaction>
</comment>
<comment type="subunit">
    <text evidence="2">Monomer.</text>
</comment>
<comment type="subcellular location">
    <subcellularLocation>
        <location evidence="2">Cytoplasm</location>
    </subcellularLocation>
</comment>
<comment type="similarity">
    <text evidence="2">Belongs to the TRAFAC class translation factor GTPase superfamily. Classic translation factor GTPase family. EF-Tu/EF-1A subfamily.</text>
</comment>
<reference key="1">
    <citation type="journal article" date="2005" name="PLoS Genet.">
        <title>Life in hot carbon monoxide: the complete genome sequence of Carboxydothermus hydrogenoformans Z-2901.</title>
        <authorList>
            <person name="Wu M."/>
            <person name="Ren Q."/>
            <person name="Durkin A.S."/>
            <person name="Daugherty S.C."/>
            <person name="Brinkac L.M."/>
            <person name="Dodson R.J."/>
            <person name="Madupu R."/>
            <person name="Sullivan S.A."/>
            <person name="Kolonay J.F."/>
            <person name="Nelson W.C."/>
            <person name="Tallon L.J."/>
            <person name="Jones K.M."/>
            <person name="Ulrich L.E."/>
            <person name="Gonzalez J.M."/>
            <person name="Zhulin I.B."/>
            <person name="Robb F.T."/>
            <person name="Eisen J.A."/>
        </authorList>
    </citation>
    <scope>NUCLEOTIDE SEQUENCE [LARGE SCALE GENOMIC DNA]</scope>
    <source>
        <strain>ATCC BAA-161 / DSM 6008 / Z-2901</strain>
    </source>
</reference>
<feature type="chain" id="PRO_0000337349" description="Elongation factor Tu 2">
    <location>
        <begin position="1"/>
        <end position="400"/>
    </location>
</feature>
<feature type="domain" description="tr-type G">
    <location>
        <begin position="10"/>
        <end position="209"/>
    </location>
</feature>
<feature type="region of interest" description="G1" evidence="1">
    <location>
        <begin position="19"/>
        <end position="26"/>
    </location>
</feature>
<feature type="region of interest" description="G2" evidence="1">
    <location>
        <begin position="60"/>
        <end position="64"/>
    </location>
</feature>
<feature type="region of interest" description="G3" evidence="1">
    <location>
        <begin position="81"/>
        <end position="84"/>
    </location>
</feature>
<feature type="region of interest" description="G4" evidence="1">
    <location>
        <begin position="136"/>
        <end position="139"/>
    </location>
</feature>
<feature type="region of interest" description="G5" evidence="1">
    <location>
        <begin position="174"/>
        <end position="176"/>
    </location>
</feature>
<feature type="binding site" evidence="2">
    <location>
        <begin position="19"/>
        <end position="26"/>
    </location>
    <ligand>
        <name>GTP</name>
        <dbReference type="ChEBI" id="CHEBI:37565"/>
    </ligand>
</feature>
<feature type="binding site" evidence="2">
    <location>
        <position position="26"/>
    </location>
    <ligand>
        <name>Mg(2+)</name>
        <dbReference type="ChEBI" id="CHEBI:18420"/>
    </ligand>
</feature>
<feature type="binding site" evidence="2">
    <location>
        <begin position="81"/>
        <end position="85"/>
    </location>
    <ligand>
        <name>GTP</name>
        <dbReference type="ChEBI" id="CHEBI:37565"/>
    </ligand>
</feature>
<feature type="binding site" evidence="2">
    <location>
        <begin position="136"/>
        <end position="139"/>
    </location>
    <ligand>
        <name>GTP</name>
        <dbReference type="ChEBI" id="CHEBI:37565"/>
    </ligand>
</feature>
<protein>
    <recommendedName>
        <fullName evidence="2">Elongation factor Tu 2</fullName>
        <shortName evidence="2">EF-Tu 2</shortName>
        <ecNumber evidence="2">3.6.5.3</ecNumber>
    </recommendedName>
</protein>
<evidence type="ECO:0000250" key="1"/>
<evidence type="ECO:0000255" key="2">
    <source>
        <dbReference type="HAMAP-Rule" id="MF_00118"/>
    </source>
</evidence>
<accession>Q3A9P8</accession>
<proteinExistence type="inferred from homology"/>
<organism>
    <name type="scientific">Carboxydothermus hydrogenoformans (strain ATCC BAA-161 / DSM 6008 / Z-2901)</name>
    <dbReference type="NCBI Taxonomy" id="246194"/>
    <lineage>
        <taxon>Bacteria</taxon>
        <taxon>Bacillati</taxon>
        <taxon>Bacillota</taxon>
        <taxon>Clostridia</taxon>
        <taxon>Thermoanaerobacterales</taxon>
        <taxon>Thermoanaerobacteraceae</taxon>
        <taxon>Carboxydothermus</taxon>
    </lineage>
</organism>
<gene>
    <name evidence="2" type="primary">tuf2</name>
    <name type="ordered locus">CHY_2327</name>
</gene>
<sequence length="400" mass="44166">MAKAKFERVKPHVNIGTIGHVDHGKTTLTAAITTVLAKKGLAQQKRYDEIDNAPEERERGITINTAHVEYETEKRHYAHVDCPGHADYVKNMITGAAQMDGAILVVSAADGPMPQTREHILLARQVGVPYIVVFLNKADMVDDPELMELVEMEVRDLLSTYEFPGDEVPVVAGSALKALECGCGKEDCPWCGKILELMDKVDEYIPTPQRDVDKPFLMPVEDVFTITGRGTVATGRVERGRITIGEEVEIVGLMDAPRKTVVTGLEMFRKVLDEAVAGDNIGALLRGVDRKEIERGQVLAKPGTIKPHRKFFAEVYVLTKEEGGRHTPFFNGYRPQFYFRTTDVTGVIHLPEGVEMVMPGDNVKIHIELITPIAIEEGLRFAIREGGRTVGAGVVTAIEE</sequence>
<name>EFTU2_CARHZ</name>